<reference key="1">
    <citation type="journal article" date="2005" name="Nat. Biotechnol.">
        <title>Complete genome sequence of the plant commensal Pseudomonas fluorescens Pf-5.</title>
        <authorList>
            <person name="Paulsen I.T."/>
            <person name="Press C.M."/>
            <person name="Ravel J."/>
            <person name="Kobayashi D.Y."/>
            <person name="Myers G.S.A."/>
            <person name="Mavrodi D.V."/>
            <person name="DeBoy R.T."/>
            <person name="Seshadri R."/>
            <person name="Ren Q."/>
            <person name="Madupu R."/>
            <person name="Dodson R.J."/>
            <person name="Durkin A.S."/>
            <person name="Brinkac L.M."/>
            <person name="Daugherty S.C."/>
            <person name="Sullivan S.A."/>
            <person name="Rosovitz M.J."/>
            <person name="Gwinn M.L."/>
            <person name="Zhou L."/>
            <person name="Schneider D.J."/>
            <person name="Cartinhour S.W."/>
            <person name="Nelson W.C."/>
            <person name="Weidman J."/>
            <person name="Watkins K."/>
            <person name="Tran K."/>
            <person name="Khouri H."/>
            <person name="Pierson E.A."/>
            <person name="Pierson L.S. III"/>
            <person name="Thomashow L.S."/>
            <person name="Loper J.E."/>
        </authorList>
    </citation>
    <scope>NUCLEOTIDE SEQUENCE [LARGE SCALE GENOMIC DNA]</scope>
    <source>
        <strain>ATCC BAA-477 / NRRL B-23932 / Pf-5</strain>
    </source>
</reference>
<dbReference type="EC" id="7.1.2.2" evidence="1"/>
<dbReference type="EMBL" id="CP000076">
    <property type="protein sequence ID" value="AAY95404.1"/>
    <property type="molecule type" value="Genomic_DNA"/>
</dbReference>
<dbReference type="RefSeq" id="WP_011064381.1">
    <property type="nucleotide sequence ID" value="NC_004129.6"/>
</dbReference>
<dbReference type="SMR" id="Q4K3A9"/>
<dbReference type="STRING" id="220664.PFL_6216"/>
<dbReference type="GeneID" id="57479176"/>
<dbReference type="KEGG" id="pfl:PFL_6216"/>
<dbReference type="PATRIC" id="fig|220664.5.peg.6346"/>
<dbReference type="eggNOG" id="COG0055">
    <property type="taxonomic scope" value="Bacteria"/>
</dbReference>
<dbReference type="HOGENOM" id="CLU_022398_0_2_6"/>
<dbReference type="Proteomes" id="UP000008540">
    <property type="component" value="Chromosome"/>
</dbReference>
<dbReference type="GO" id="GO:0005886">
    <property type="term" value="C:plasma membrane"/>
    <property type="evidence" value="ECO:0007669"/>
    <property type="project" value="UniProtKB-SubCell"/>
</dbReference>
<dbReference type="GO" id="GO:0045259">
    <property type="term" value="C:proton-transporting ATP synthase complex"/>
    <property type="evidence" value="ECO:0007669"/>
    <property type="project" value="UniProtKB-KW"/>
</dbReference>
<dbReference type="GO" id="GO:0005524">
    <property type="term" value="F:ATP binding"/>
    <property type="evidence" value="ECO:0007669"/>
    <property type="project" value="UniProtKB-UniRule"/>
</dbReference>
<dbReference type="GO" id="GO:0016887">
    <property type="term" value="F:ATP hydrolysis activity"/>
    <property type="evidence" value="ECO:0007669"/>
    <property type="project" value="InterPro"/>
</dbReference>
<dbReference type="GO" id="GO:0046933">
    <property type="term" value="F:proton-transporting ATP synthase activity, rotational mechanism"/>
    <property type="evidence" value="ECO:0007669"/>
    <property type="project" value="UniProtKB-UniRule"/>
</dbReference>
<dbReference type="CDD" id="cd18110">
    <property type="entry name" value="ATP-synt_F1_beta_C"/>
    <property type="match status" value="1"/>
</dbReference>
<dbReference type="CDD" id="cd18115">
    <property type="entry name" value="ATP-synt_F1_beta_N"/>
    <property type="match status" value="1"/>
</dbReference>
<dbReference type="CDD" id="cd01133">
    <property type="entry name" value="F1-ATPase_beta_CD"/>
    <property type="match status" value="1"/>
</dbReference>
<dbReference type="FunFam" id="1.10.1140.10:FF:000001">
    <property type="entry name" value="ATP synthase subunit beta"/>
    <property type="match status" value="1"/>
</dbReference>
<dbReference type="FunFam" id="2.40.10.170:FF:000003">
    <property type="entry name" value="ATP synthase subunit beta"/>
    <property type="match status" value="1"/>
</dbReference>
<dbReference type="FunFam" id="3.40.50.300:FF:000004">
    <property type="entry name" value="ATP synthase subunit beta"/>
    <property type="match status" value="1"/>
</dbReference>
<dbReference type="Gene3D" id="2.40.10.170">
    <property type="match status" value="1"/>
</dbReference>
<dbReference type="Gene3D" id="1.10.1140.10">
    <property type="entry name" value="Bovine Mitochondrial F1-atpase, Atp Synthase Beta Chain, Chain D, domain 3"/>
    <property type="match status" value="1"/>
</dbReference>
<dbReference type="Gene3D" id="3.40.50.300">
    <property type="entry name" value="P-loop containing nucleotide triphosphate hydrolases"/>
    <property type="match status" value="1"/>
</dbReference>
<dbReference type="HAMAP" id="MF_01347">
    <property type="entry name" value="ATP_synth_beta_bact"/>
    <property type="match status" value="1"/>
</dbReference>
<dbReference type="InterPro" id="IPR003593">
    <property type="entry name" value="AAA+_ATPase"/>
</dbReference>
<dbReference type="InterPro" id="IPR055190">
    <property type="entry name" value="ATP-synt_VA_C"/>
</dbReference>
<dbReference type="InterPro" id="IPR005722">
    <property type="entry name" value="ATP_synth_F1_bsu"/>
</dbReference>
<dbReference type="InterPro" id="IPR020003">
    <property type="entry name" value="ATPase_a/bsu_AS"/>
</dbReference>
<dbReference type="InterPro" id="IPR050053">
    <property type="entry name" value="ATPase_alpha/beta_chains"/>
</dbReference>
<dbReference type="InterPro" id="IPR004100">
    <property type="entry name" value="ATPase_F1/V1/A1_a/bsu_N"/>
</dbReference>
<dbReference type="InterPro" id="IPR036121">
    <property type="entry name" value="ATPase_F1/V1/A1_a/bsu_N_sf"/>
</dbReference>
<dbReference type="InterPro" id="IPR000194">
    <property type="entry name" value="ATPase_F1/V1/A1_a/bsu_nucl-bd"/>
</dbReference>
<dbReference type="InterPro" id="IPR024034">
    <property type="entry name" value="ATPase_F1/V1_b/a_C"/>
</dbReference>
<dbReference type="InterPro" id="IPR027417">
    <property type="entry name" value="P-loop_NTPase"/>
</dbReference>
<dbReference type="NCBIfam" id="TIGR01039">
    <property type="entry name" value="atpD"/>
    <property type="match status" value="1"/>
</dbReference>
<dbReference type="PANTHER" id="PTHR15184">
    <property type="entry name" value="ATP SYNTHASE"/>
    <property type="match status" value="1"/>
</dbReference>
<dbReference type="PANTHER" id="PTHR15184:SF71">
    <property type="entry name" value="ATP SYNTHASE SUBUNIT BETA, MITOCHONDRIAL"/>
    <property type="match status" value="1"/>
</dbReference>
<dbReference type="Pfam" id="PF00006">
    <property type="entry name" value="ATP-synt_ab"/>
    <property type="match status" value="1"/>
</dbReference>
<dbReference type="Pfam" id="PF02874">
    <property type="entry name" value="ATP-synt_ab_N"/>
    <property type="match status" value="1"/>
</dbReference>
<dbReference type="Pfam" id="PF22919">
    <property type="entry name" value="ATP-synt_VA_C"/>
    <property type="match status" value="1"/>
</dbReference>
<dbReference type="SMART" id="SM00382">
    <property type="entry name" value="AAA"/>
    <property type="match status" value="1"/>
</dbReference>
<dbReference type="SUPFAM" id="SSF47917">
    <property type="entry name" value="C-terminal domain of alpha and beta subunits of F1 ATP synthase"/>
    <property type="match status" value="1"/>
</dbReference>
<dbReference type="SUPFAM" id="SSF50615">
    <property type="entry name" value="N-terminal domain of alpha and beta subunits of F1 ATP synthase"/>
    <property type="match status" value="1"/>
</dbReference>
<dbReference type="SUPFAM" id="SSF52540">
    <property type="entry name" value="P-loop containing nucleoside triphosphate hydrolases"/>
    <property type="match status" value="1"/>
</dbReference>
<dbReference type="PROSITE" id="PS00152">
    <property type="entry name" value="ATPASE_ALPHA_BETA"/>
    <property type="match status" value="1"/>
</dbReference>
<keyword id="KW-0066">ATP synthesis</keyword>
<keyword id="KW-0067">ATP-binding</keyword>
<keyword id="KW-0997">Cell inner membrane</keyword>
<keyword id="KW-1003">Cell membrane</keyword>
<keyword id="KW-0139">CF(1)</keyword>
<keyword id="KW-0375">Hydrogen ion transport</keyword>
<keyword id="KW-0406">Ion transport</keyword>
<keyword id="KW-0472">Membrane</keyword>
<keyword id="KW-0547">Nucleotide-binding</keyword>
<keyword id="KW-1278">Translocase</keyword>
<keyword id="KW-0813">Transport</keyword>
<proteinExistence type="inferred from homology"/>
<organism>
    <name type="scientific">Pseudomonas fluorescens (strain ATCC BAA-477 / NRRL B-23932 / Pf-5)</name>
    <dbReference type="NCBI Taxonomy" id="220664"/>
    <lineage>
        <taxon>Bacteria</taxon>
        <taxon>Pseudomonadati</taxon>
        <taxon>Pseudomonadota</taxon>
        <taxon>Gammaproteobacteria</taxon>
        <taxon>Pseudomonadales</taxon>
        <taxon>Pseudomonadaceae</taxon>
        <taxon>Pseudomonas</taxon>
    </lineage>
</organism>
<gene>
    <name evidence="1" type="primary">atpD</name>
    <name type="ordered locus">PFL_6216</name>
</gene>
<name>ATPB_PSEF5</name>
<sequence>MSSGRIVQIIGAVIDVEFPRDSVPSIYDALKVQGAETTLEVQQQLGDGVVRTIAMGSTEGLKRGLDVNNTGAAISVPVGKATLGRIMDVLGNPIDEAGPIGEEERWGIHRPAPSFAEQAGGNDLLETGIKVIDLVCPFAKGGKVGLFGGAGVGKTVNMMELIRNIAIEHSGYSVFAGVGERTREGNDFYHEMKDSNVLDKVALVYGQMNEPPGNRLRVALTGLTMAEKFRDEGNDVLLFVDNIYRYTLAGTEVSALLGRMPSAVGYQPTLAEEMGVLQERITSTKQGSITSIQAVYVPADDLTDPSPATTFAHLDATVVLSRDIASLGIYPAVDPLDSTSRQLDPNVIGNEHYETARGVQYVLQRYKELKDIIAILGMDELSETDKQLVSRARKIQRFLSQPFFVAEVFTGSPGKYVSLKDTIAGFKGILNGDYDHLPEQAFYMVGGIDEAIEKAKKL</sequence>
<feature type="chain" id="PRO_0000254339" description="ATP synthase subunit beta">
    <location>
        <begin position="1"/>
        <end position="458"/>
    </location>
</feature>
<feature type="binding site" evidence="1">
    <location>
        <begin position="148"/>
        <end position="155"/>
    </location>
    <ligand>
        <name>ATP</name>
        <dbReference type="ChEBI" id="CHEBI:30616"/>
    </ligand>
</feature>
<comment type="function">
    <text evidence="1">Produces ATP from ADP in the presence of a proton gradient across the membrane. The catalytic sites are hosted primarily by the beta subunits.</text>
</comment>
<comment type="catalytic activity">
    <reaction evidence="1">
        <text>ATP + H2O + 4 H(+)(in) = ADP + phosphate + 5 H(+)(out)</text>
        <dbReference type="Rhea" id="RHEA:57720"/>
        <dbReference type="ChEBI" id="CHEBI:15377"/>
        <dbReference type="ChEBI" id="CHEBI:15378"/>
        <dbReference type="ChEBI" id="CHEBI:30616"/>
        <dbReference type="ChEBI" id="CHEBI:43474"/>
        <dbReference type="ChEBI" id="CHEBI:456216"/>
        <dbReference type="EC" id="7.1.2.2"/>
    </reaction>
</comment>
<comment type="subunit">
    <text evidence="1">F-type ATPases have 2 components, CF(1) - the catalytic core - and CF(0) - the membrane proton channel. CF(1) has five subunits: alpha(3), beta(3), gamma(1), delta(1), epsilon(1). CF(0) has three main subunits: a(1), b(2) and c(9-12). The alpha and beta chains form an alternating ring which encloses part of the gamma chain. CF(1) is attached to CF(0) by a central stalk formed by the gamma and epsilon chains, while a peripheral stalk is formed by the delta and b chains.</text>
</comment>
<comment type="subcellular location">
    <subcellularLocation>
        <location evidence="1">Cell inner membrane</location>
        <topology evidence="1">Peripheral membrane protein</topology>
    </subcellularLocation>
</comment>
<comment type="similarity">
    <text evidence="1">Belongs to the ATPase alpha/beta chains family.</text>
</comment>
<accession>Q4K3A9</accession>
<evidence type="ECO:0000255" key="1">
    <source>
        <dbReference type="HAMAP-Rule" id="MF_01347"/>
    </source>
</evidence>
<protein>
    <recommendedName>
        <fullName evidence="1">ATP synthase subunit beta</fullName>
        <ecNumber evidence="1">7.1.2.2</ecNumber>
    </recommendedName>
    <alternativeName>
        <fullName evidence="1">ATP synthase F1 sector subunit beta</fullName>
    </alternativeName>
    <alternativeName>
        <fullName evidence="1">F-ATPase subunit beta</fullName>
    </alternativeName>
</protein>